<keyword id="KW-1003">Cell membrane</keyword>
<keyword id="KW-0472">Membrane</keyword>
<keyword id="KW-1185">Reference proteome</keyword>
<keyword id="KW-0812">Transmembrane</keyword>
<keyword id="KW-1133">Transmembrane helix</keyword>
<comment type="subcellular location">
    <subcellularLocation>
        <location evidence="2">Cell membrane</location>
        <topology evidence="2">Multi-pass membrane protein</topology>
    </subcellularLocation>
</comment>
<dbReference type="EMBL" id="L77117">
    <property type="protein sequence ID" value="AAB98802.1"/>
    <property type="molecule type" value="Genomic_DNA"/>
</dbReference>
<dbReference type="SMR" id="P81314"/>
<dbReference type="STRING" id="243232.MJ_0796.1"/>
<dbReference type="PaxDb" id="243232-MJ_0796.1"/>
<dbReference type="EnsemblBacteria" id="AAB98802">
    <property type="protein sequence ID" value="AAB98802"/>
    <property type="gene ID" value="MJ_0796.1"/>
</dbReference>
<dbReference type="KEGG" id="mja:MJ_0796.1"/>
<dbReference type="eggNOG" id="arCOG09675">
    <property type="taxonomic scope" value="Archaea"/>
</dbReference>
<dbReference type="HOGENOM" id="CLU_1821057_0_0_2"/>
<dbReference type="InParanoid" id="P81314"/>
<dbReference type="OrthoDB" id="66133at2157"/>
<dbReference type="Proteomes" id="UP000000805">
    <property type="component" value="Chromosome"/>
</dbReference>
<dbReference type="GO" id="GO:0005886">
    <property type="term" value="C:plasma membrane"/>
    <property type="evidence" value="ECO:0007669"/>
    <property type="project" value="UniProtKB-SubCell"/>
</dbReference>
<evidence type="ECO:0000255" key="1"/>
<evidence type="ECO:0000305" key="2"/>
<sequence length="137" mass="15905">MMIDNISNFDKVRAVVVAILLYIFIILVVDGSISSLIGKYITYPSDEYHIIEFYDFIHIIGFLLSLSISTYFSSKDIIKDFAKFFTIFFGITFILGITLFLGLTFFENHIPSMRGYTTLMLFFFLLNLFKKLDKITN</sequence>
<proteinExistence type="predicted"/>
<name>Y79C_METJA</name>
<gene>
    <name type="ordered locus">MJ0796.1</name>
</gene>
<feature type="chain" id="PRO_0000107048" description="Uncharacterized protein MJ0796.1">
    <location>
        <begin position="1"/>
        <end position="137"/>
    </location>
</feature>
<feature type="transmembrane region" description="Helical" evidence="1">
    <location>
        <begin position="14"/>
        <end position="34"/>
    </location>
</feature>
<feature type="transmembrane region" description="Helical" evidence="1">
    <location>
        <begin position="48"/>
        <end position="68"/>
    </location>
</feature>
<feature type="transmembrane region" description="Helical" evidence="1">
    <location>
        <begin position="84"/>
        <end position="104"/>
    </location>
</feature>
<feature type="transmembrane region" description="Helical" evidence="1">
    <location>
        <begin position="109"/>
        <end position="129"/>
    </location>
</feature>
<reference key="1">
    <citation type="journal article" date="1996" name="Science">
        <title>Complete genome sequence of the methanogenic archaeon, Methanococcus jannaschii.</title>
        <authorList>
            <person name="Bult C.J."/>
            <person name="White O."/>
            <person name="Olsen G.J."/>
            <person name="Zhou L."/>
            <person name="Fleischmann R.D."/>
            <person name="Sutton G.G."/>
            <person name="Blake J.A."/>
            <person name="FitzGerald L.M."/>
            <person name="Clayton R.A."/>
            <person name="Gocayne J.D."/>
            <person name="Kerlavage A.R."/>
            <person name="Dougherty B.A."/>
            <person name="Tomb J.-F."/>
            <person name="Adams M.D."/>
            <person name="Reich C.I."/>
            <person name="Overbeek R."/>
            <person name="Kirkness E.F."/>
            <person name="Weinstock K.G."/>
            <person name="Merrick J.M."/>
            <person name="Glodek A."/>
            <person name="Scott J.L."/>
            <person name="Geoghagen N.S.M."/>
            <person name="Weidman J.F."/>
            <person name="Fuhrmann J.L."/>
            <person name="Nguyen D."/>
            <person name="Utterback T.R."/>
            <person name="Kelley J.M."/>
            <person name="Peterson J.D."/>
            <person name="Sadow P.W."/>
            <person name="Hanna M.C."/>
            <person name="Cotton M.D."/>
            <person name="Roberts K.M."/>
            <person name="Hurst M.A."/>
            <person name="Kaine B.P."/>
            <person name="Borodovsky M."/>
            <person name="Klenk H.-P."/>
            <person name="Fraser C.M."/>
            <person name="Smith H.O."/>
            <person name="Woese C.R."/>
            <person name="Venter J.C."/>
        </authorList>
    </citation>
    <scope>NUCLEOTIDE SEQUENCE [LARGE SCALE GENOMIC DNA]</scope>
    <source>
        <strain>ATCC 43067 / DSM 2661 / JAL-1 / JCM 10045 / NBRC 100440</strain>
    </source>
</reference>
<accession>P81314</accession>
<protein>
    <recommendedName>
        <fullName>Uncharacterized protein MJ0796.1</fullName>
    </recommendedName>
</protein>
<organism>
    <name type="scientific">Methanocaldococcus jannaschii (strain ATCC 43067 / DSM 2661 / JAL-1 / JCM 10045 / NBRC 100440)</name>
    <name type="common">Methanococcus jannaschii</name>
    <dbReference type="NCBI Taxonomy" id="243232"/>
    <lineage>
        <taxon>Archaea</taxon>
        <taxon>Methanobacteriati</taxon>
        <taxon>Methanobacteriota</taxon>
        <taxon>Methanomada group</taxon>
        <taxon>Methanococci</taxon>
        <taxon>Methanococcales</taxon>
        <taxon>Methanocaldococcaceae</taxon>
        <taxon>Methanocaldococcus</taxon>
    </lineage>
</organism>